<feature type="signal peptide" evidence="1">
    <location>
        <begin position="1"/>
        <end position="18"/>
    </location>
</feature>
<feature type="chain" id="PRO_0000353942" description="Membrane-bound lytic murein transglycosylase F">
    <location>
        <begin position="19"/>
        <end position="482"/>
    </location>
</feature>
<feature type="region of interest" description="Non-LT domain" evidence="1">
    <location>
        <begin position="19"/>
        <end position="267"/>
    </location>
</feature>
<feature type="region of interest" description="LT domain" evidence="1">
    <location>
        <begin position="268"/>
        <end position="482"/>
    </location>
</feature>
<feature type="region of interest" description="Disordered" evidence="2">
    <location>
        <begin position="457"/>
        <end position="482"/>
    </location>
</feature>
<feature type="compositionally biased region" description="Polar residues" evidence="2">
    <location>
        <begin position="457"/>
        <end position="470"/>
    </location>
</feature>
<feature type="compositionally biased region" description="Basic and acidic residues" evidence="2">
    <location>
        <begin position="473"/>
        <end position="482"/>
    </location>
</feature>
<feature type="active site" evidence="1">
    <location>
        <position position="312"/>
    </location>
</feature>
<keyword id="KW-0998">Cell outer membrane</keyword>
<keyword id="KW-0961">Cell wall biogenesis/degradation</keyword>
<keyword id="KW-0456">Lyase</keyword>
<keyword id="KW-0472">Membrane</keyword>
<keyword id="KW-0732">Signal</keyword>
<dbReference type="EC" id="4.2.2.n1" evidence="1"/>
<dbReference type="EMBL" id="CP000672">
    <property type="protein sequence ID" value="ABQ99741.1"/>
    <property type="molecule type" value="Genomic_DNA"/>
</dbReference>
<dbReference type="SMR" id="A5UG36"/>
<dbReference type="CAZy" id="GH23">
    <property type="family name" value="Glycoside Hydrolase Family 23"/>
</dbReference>
<dbReference type="KEGG" id="hiq:CGSHiGG_03795"/>
<dbReference type="HOGENOM" id="CLU_027494_0_1_6"/>
<dbReference type="Proteomes" id="UP000001990">
    <property type="component" value="Chromosome"/>
</dbReference>
<dbReference type="GO" id="GO:0009279">
    <property type="term" value="C:cell outer membrane"/>
    <property type="evidence" value="ECO:0007669"/>
    <property type="project" value="UniProtKB-SubCell"/>
</dbReference>
<dbReference type="GO" id="GO:0008933">
    <property type="term" value="F:peptidoglycan lytic transglycosylase activity"/>
    <property type="evidence" value="ECO:0007669"/>
    <property type="project" value="UniProtKB-UniRule"/>
</dbReference>
<dbReference type="GO" id="GO:0016998">
    <property type="term" value="P:cell wall macromolecule catabolic process"/>
    <property type="evidence" value="ECO:0007669"/>
    <property type="project" value="UniProtKB-UniRule"/>
</dbReference>
<dbReference type="GO" id="GO:0071555">
    <property type="term" value="P:cell wall organization"/>
    <property type="evidence" value="ECO:0007669"/>
    <property type="project" value="UniProtKB-KW"/>
</dbReference>
<dbReference type="GO" id="GO:0009253">
    <property type="term" value="P:peptidoglycan catabolic process"/>
    <property type="evidence" value="ECO:0007669"/>
    <property type="project" value="TreeGrafter"/>
</dbReference>
<dbReference type="CDD" id="cd13403">
    <property type="entry name" value="MLTF-like"/>
    <property type="match status" value="1"/>
</dbReference>
<dbReference type="CDD" id="cd01009">
    <property type="entry name" value="PBP2_YfhD_N"/>
    <property type="match status" value="1"/>
</dbReference>
<dbReference type="FunFam" id="1.10.530.10:FF:000003">
    <property type="entry name" value="Membrane-bound lytic murein transglycosylase F"/>
    <property type="match status" value="1"/>
</dbReference>
<dbReference type="Gene3D" id="1.10.530.10">
    <property type="match status" value="1"/>
</dbReference>
<dbReference type="Gene3D" id="3.40.190.10">
    <property type="entry name" value="Periplasmic binding protein-like II"/>
    <property type="match status" value="2"/>
</dbReference>
<dbReference type="HAMAP" id="MF_02016">
    <property type="entry name" value="MltF"/>
    <property type="match status" value="1"/>
</dbReference>
<dbReference type="InterPro" id="IPR023346">
    <property type="entry name" value="Lysozyme-like_dom_sf"/>
</dbReference>
<dbReference type="InterPro" id="IPR023703">
    <property type="entry name" value="MltF"/>
</dbReference>
<dbReference type="InterPro" id="IPR001638">
    <property type="entry name" value="Solute-binding_3/MltF_N"/>
</dbReference>
<dbReference type="InterPro" id="IPR000189">
    <property type="entry name" value="Transglyc_AS"/>
</dbReference>
<dbReference type="InterPro" id="IPR008258">
    <property type="entry name" value="Transglycosylase_SLT_dom_1"/>
</dbReference>
<dbReference type="NCBIfam" id="NF008112">
    <property type="entry name" value="PRK10859.1"/>
    <property type="match status" value="1"/>
</dbReference>
<dbReference type="PANTHER" id="PTHR35936">
    <property type="entry name" value="MEMBRANE-BOUND LYTIC MUREIN TRANSGLYCOSYLASE F"/>
    <property type="match status" value="1"/>
</dbReference>
<dbReference type="PANTHER" id="PTHR35936:SF32">
    <property type="entry name" value="MEMBRANE-BOUND LYTIC MUREIN TRANSGLYCOSYLASE F"/>
    <property type="match status" value="1"/>
</dbReference>
<dbReference type="Pfam" id="PF00497">
    <property type="entry name" value="SBP_bac_3"/>
    <property type="match status" value="1"/>
</dbReference>
<dbReference type="Pfam" id="PF01464">
    <property type="entry name" value="SLT"/>
    <property type="match status" value="1"/>
</dbReference>
<dbReference type="SMART" id="SM00062">
    <property type="entry name" value="PBPb"/>
    <property type="match status" value="1"/>
</dbReference>
<dbReference type="SUPFAM" id="SSF53955">
    <property type="entry name" value="Lysozyme-like"/>
    <property type="match status" value="1"/>
</dbReference>
<dbReference type="SUPFAM" id="SSF53850">
    <property type="entry name" value="Periplasmic binding protein-like II"/>
    <property type="match status" value="1"/>
</dbReference>
<dbReference type="PROSITE" id="PS00922">
    <property type="entry name" value="TRANSGLYCOSYLASE"/>
    <property type="match status" value="1"/>
</dbReference>
<name>MLTF_HAEIG</name>
<sequence>MKGLFLRIITALALLFWAIDMVFPWQFLRHTEENHYTAIQARGSLYVGTINNQISYFINKDSERGFEYELAKAFADTLGVELEMKIFDNQEQLFDELNKHNIDLAAAHLLYHPKNAERFQIGPAYHSASWQLAYRKNENRPKNLGNVKKDIYISNNLALEETLKELQKQYPQLIWKRNQALTQEELLLQLAEGKIPYVIANSIDIAAIQQIKPELAIAFDITDEANVHWYLPNSPYRDLQTALLNFMNNAEETGLLDNLKEKYLGHISQFDYVDTRSYMNAIENILPQFSPLFEKYKGELDWRLLAAVAYQESHWNPDATSPTGVRGIMMLTKNTAQHMKISDRTDPEQSIKAGSEYLHWLISQLPESIEKEERIWFALVAYNIGLGHLIDARRLTQNLGGNPDNWLNVKKNLPLLAEKRYYSQLKYGYARGYEAYQYVENIRRYMNSIVNYHRVQENQTTNDNANNESAVKNLEEIKENED</sequence>
<accession>A5UG36</accession>
<comment type="function">
    <text evidence="1">Murein-degrading enzyme that degrades murein glycan strands and insoluble, high-molecular weight murein sacculi, with the concomitant formation of a 1,6-anhydromuramoyl product. Lytic transglycosylases (LTs) play an integral role in the metabolism of the peptidoglycan (PG) sacculus. Their lytic action creates space within the PG sacculus to allow for its expansion as well as for the insertion of various structures such as secretion systems and flagella.</text>
</comment>
<comment type="catalytic activity">
    <reaction evidence="1">
        <text>Exolytic cleavage of the (1-&gt;4)-beta-glycosidic linkage between N-acetylmuramic acid (MurNAc) and N-acetylglucosamine (GlcNAc) residues in peptidoglycan, from either the reducing or the non-reducing ends of the peptidoglycan chains, with concomitant formation of a 1,6-anhydrobond in the MurNAc residue.</text>
        <dbReference type="EC" id="4.2.2.n1"/>
    </reaction>
</comment>
<comment type="subcellular location">
    <subcellularLocation>
        <location>Cell outer membrane</location>
        <topology>Peripheral membrane protein</topology>
    </subcellularLocation>
    <text evidence="1">Attached to the inner leaflet of the outer membrane.</text>
</comment>
<comment type="domain">
    <text evidence="1">The N-terminal domain does not have lytic activity and probably modulates enzymatic activity. The C-terminal domain is the catalytic active domain.</text>
</comment>
<comment type="similarity">
    <text evidence="1">In the N-terminal section; belongs to the bacterial solute-binding protein 3 family.</text>
</comment>
<comment type="similarity">
    <text evidence="1">In the C-terminal section; belongs to the transglycosylase Slt family.</text>
</comment>
<proteinExistence type="inferred from homology"/>
<protein>
    <recommendedName>
        <fullName evidence="1">Membrane-bound lytic murein transglycosylase F</fullName>
        <ecNumber evidence="1">4.2.2.n1</ecNumber>
    </recommendedName>
    <alternativeName>
        <fullName evidence="1">Murein lyase F</fullName>
    </alternativeName>
</protein>
<gene>
    <name evidence="1" type="primary">mltF</name>
    <name type="ordered locus">CGSHiGG_03795</name>
</gene>
<organism>
    <name type="scientific">Haemophilus influenzae (strain PittGG)</name>
    <dbReference type="NCBI Taxonomy" id="374931"/>
    <lineage>
        <taxon>Bacteria</taxon>
        <taxon>Pseudomonadati</taxon>
        <taxon>Pseudomonadota</taxon>
        <taxon>Gammaproteobacteria</taxon>
        <taxon>Pasteurellales</taxon>
        <taxon>Pasteurellaceae</taxon>
        <taxon>Haemophilus</taxon>
    </lineage>
</organism>
<evidence type="ECO:0000255" key="1">
    <source>
        <dbReference type="HAMAP-Rule" id="MF_02016"/>
    </source>
</evidence>
<evidence type="ECO:0000256" key="2">
    <source>
        <dbReference type="SAM" id="MobiDB-lite"/>
    </source>
</evidence>
<reference key="1">
    <citation type="journal article" date="2007" name="Genome Biol.">
        <title>Characterization and modeling of the Haemophilus influenzae core and supragenomes based on the complete genomic sequences of Rd and 12 clinical nontypeable strains.</title>
        <authorList>
            <person name="Hogg J.S."/>
            <person name="Hu F.Z."/>
            <person name="Janto B."/>
            <person name="Boissy R."/>
            <person name="Hayes J."/>
            <person name="Keefe R."/>
            <person name="Post J.C."/>
            <person name="Ehrlich G.D."/>
        </authorList>
    </citation>
    <scope>NUCLEOTIDE SEQUENCE [LARGE SCALE GENOMIC DNA]</scope>
    <source>
        <strain>PittGG</strain>
    </source>
</reference>